<accession>O46390</accession>
<proteinExistence type="evidence at transcript level"/>
<feature type="signal peptide" evidence="3">
    <location>
        <begin position="1"/>
        <end position="16"/>
    </location>
</feature>
<feature type="propeptide" id="PRO_0000032699" evidence="2">
    <location>
        <begin position="17"/>
        <end position="37"/>
    </location>
</feature>
<feature type="chain" id="PRO_0000032700" description="Biglycan">
    <location>
        <begin position="38"/>
        <end position="369"/>
    </location>
</feature>
<feature type="repeat" description="LRR 1">
    <location>
        <begin position="83"/>
        <end position="103"/>
    </location>
</feature>
<feature type="repeat" description="LRR 2">
    <location>
        <begin position="104"/>
        <end position="127"/>
    </location>
</feature>
<feature type="repeat" description="LRR 3">
    <location>
        <begin position="128"/>
        <end position="151"/>
    </location>
</feature>
<feature type="repeat" description="LRR 4">
    <location>
        <begin position="152"/>
        <end position="172"/>
    </location>
</feature>
<feature type="repeat" description="LRR 5">
    <location>
        <begin position="173"/>
        <end position="196"/>
    </location>
</feature>
<feature type="repeat" description="LRR 6">
    <location>
        <begin position="197"/>
        <end position="221"/>
    </location>
</feature>
<feature type="repeat" description="LRR 7">
    <location>
        <begin position="222"/>
        <end position="242"/>
    </location>
</feature>
<feature type="repeat" description="LRR 8">
    <location>
        <begin position="243"/>
        <end position="266"/>
    </location>
</feature>
<feature type="repeat" description="LRR 9">
    <location>
        <begin position="267"/>
        <end position="290"/>
    </location>
</feature>
<feature type="repeat" description="LRR 10">
    <location>
        <begin position="291"/>
        <end position="313"/>
    </location>
</feature>
<feature type="repeat" description="LRR 11">
    <location>
        <begin position="314"/>
        <end position="343"/>
    </location>
</feature>
<feature type="repeat" description="LRR 12">
    <location>
        <begin position="344"/>
        <end position="369"/>
    </location>
</feature>
<feature type="glycosylation site" description="O-linked (Xyl...) (glycosaminoglycan) serine" evidence="2">
    <location>
        <position position="42"/>
    </location>
</feature>
<feature type="glycosylation site" description="O-linked (Xyl...) (glycosaminoglycan) serine" evidence="2">
    <location>
        <position position="48"/>
    </location>
</feature>
<feature type="glycosylation site" description="N-linked (GlcNAc...) asparagine" evidence="4">
    <location>
        <position position="271"/>
    </location>
</feature>
<feature type="glycosylation site" description="N-linked (GlcNAc...) asparagine" evidence="4">
    <location>
        <position position="312"/>
    </location>
</feature>
<feature type="disulfide bond" evidence="1">
    <location>
        <begin position="64"/>
        <end position="70"/>
    </location>
</feature>
<feature type="disulfide bond" evidence="1">
    <location>
        <begin position="68"/>
        <end position="77"/>
    </location>
</feature>
<feature type="disulfide bond" evidence="1">
    <location>
        <begin position="322"/>
        <end position="355"/>
    </location>
</feature>
<organism>
    <name type="scientific">Ovis aries</name>
    <name type="common">Sheep</name>
    <dbReference type="NCBI Taxonomy" id="9940"/>
    <lineage>
        <taxon>Eukaryota</taxon>
        <taxon>Metazoa</taxon>
        <taxon>Chordata</taxon>
        <taxon>Craniata</taxon>
        <taxon>Vertebrata</taxon>
        <taxon>Euteleostomi</taxon>
        <taxon>Mammalia</taxon>
        <taxon>Eutheria</taxon>
        <taxon>Laurasiatheria</taxon>
        <taxon>Artiodactyla</taxon>
        <taxon>Ruminantia</taxon>
        <taxon>Pecora</taxon>
        <taxon>Bovidae</taxon>
        <taxon>Caprinae</taxon>
        <taxon>Ovis</taxon>
    </lineage>
</organism>
<sequence>MCPLWLLAALLALSQALPFEQKAFWDFTLDDGLPMLNDEEASGAETTSGIPDLDSLPPTYSAMCPFGCHCHLRVVQCSDLGLKAVPKEISPDTTLLDLQNNDISELRKDDFKGLQHLYALVLVNNKISKIHEKAFSPLRKLQKLYISKNHLVEIPPNLPSSLVELRIHDNRIRKVPKGVFSGLRNMNCIEMGGNPLENSGFEPGAFDGLKLNYLRISEAKLTGIPKDLPETLNELHLDHNKIQAIELEDLLRYSKLYRLGLGHNQIRMIENGSLSFLPTLRELHLDNNKLSRVPAGLPDLKLLQVVYLHTNNITKVGVNDFCPVGFGVKRAYYNGISLFNNPVPYWEVQPATFRCVTDRLAIQFGNYKK</sequence>
<evidence type="ECO:0000250" key="1"/>
<evidence type="ECO:0000250" key="2">
    <source>
        <dbReference type="UniProtKB" id="P21810"/>
    </source>
</evidence>
<evidence type="ECO:0000250" key="3">
    <source>
        <dbReference type="UniProtKB" id="P47853"/>
    </source>
</evidence>
<evidence type="ECO:0000255" key="4"/>
<evidence type="ECO:0000305" key="5"/>
<keyword id="KW-1015">Disulfide bond</keyword>
<keyword id="KW-0272">Extracellular matrix</keyword>
<keyword id="KW-0325">Glycoprotein</keyword>
<keyword id="KW-0433">Leucine-rich repeat</keyword>
<keyword id="KW-0654">Proteoglycan</keyword>
<keyword id="KW-1185">Reference proteome</keyword>
<keyword id="KW-0677">Repeat</keyword>
<keyword id="KW-0964">Secreted</keyword>
<keyword id="KW-0732">Signal</keyword>
<reference key="1">
    <citation type="submission" date="1997-11" db="EMBL/GenBank/DDBJ databases">
        <authorList>
            <person name="Bruett L."/>
            <person name="Clements J.E."/>
        </authorList>
    </citation>
    <scope>NUCLEOTIDE SEQUENCE [MRNA]</scope>
    <source>
        <tissue>Choroid plexus</tissue>
    </source>
</reference>
<protein>
    <recommendedName>
        <fullName>Biglycan</fullName>
    </recommendedName>
    <alternativeName>
        <fullName>Bone/cartilage proteoglycan I</fullName>
    </alternativeName>
    <alternativeName>
        <fullName>PG-S1</fullName>
    </alternativeName>
</protein>
<dbReference type="EMBL" id="AF034842">
    <property type="protein sequence ID" value="AAB87988.1"/>
    <property type="molecule type" value="mRNA"/>
</dbReference>
<dbReference type="RefSeq" id="NP_001009201.1">
    <property type="nucleotide sequence ID" value="NM_001009201.1"/>
</dbReference>
<dbReference type="SMR" id="O46390"/>
<dbReference type="STRING" id="9940.ENSOARP00000008210"/>
<dbReference type="GlyCosmos" id="O46390">
    <property type="glycosylation" value="4 sites, No reported glycans"/>
</dbReference>
<dbReference type="PaxDb" id="9940-ENSOARP00000008210"/>
<dbReference type="GeneID" id="443011"/>
<dbReference type="KEGG" id="oas:443011"/>
<dbReference type="CTD" id="633"/>
<dbReference type="eggNOG" id="KOG0619">
    <property type="taxonomic scope" value="Eukaryota"/>
</dbReference>
<dbReference type="OrthoDB" id="1111193at2759"/>
<dbReference type="Proteomes" id="UP000002356">
    <property type="component" value="Unplaced"/>
</dbReference>
<dbReference type="GO" id="GO:0005615">
    <property type="term" value="C:extracellular space"/>
    <property type="evidence" value="ECO:0007669"/>
    <property type="project" value="TreeGrafter"/>
</dbReference>
<dbReference type="FunFam" id="3.80.10.10:FF:000038">
    <property type="entry name" value="Biglycan"/>
    <property type="match status" value="1"/>
</dbReference>
<dbReference type="Gene3D" id="3.80.10.10">
    <property type="entry name" value="Ribonuclease Inhibitor"/>
    <property type="match status" value="1"/>
</dbReference>
<dbReference type="InterPro" id="IPR001611">
    <property type="entry name" value="Leu-rich_rpt"/>
</dbReference>
<dbReference type="InterPro" id="IPR003591">
    <property type="entry name" value="Leu-rich_rpt_typical-subtyp"/>
</dbReference>
<dbReference type="InterPro" id="IPR032675">
    <property type="entry name" value="LRR_dom_sf"/>
</dbReference>
<dbReference type="InterPro" id="IPR000372">
    <property type="entry name" value="LRRNT"/>
</dbReference>
<dbReference type="InterPro" id="IPR050333">
    <property type="entry name" value="SLRP"/>
</dbReference>
<dbReference type="InterPro" id="IPR016352">
    <property type="entry name" value="SLRP_I_decor/aspor/byglycan"/>
</dbReference>
<dbReference type="PANTHER" id="PTHR45712">
    <property type="entry name" value="AGAP008170-PA"/>
    <property type="match status" value="1"/>
</dbReference>
<dbReference type="PANTHER" id="PTHR45712:SF11">
    <property type="entry name" value="BIGLYCAN"/>
    <property type="match status" value="1"/>
</dbReference>
<dbReference type="Pfam" id="PF13855">
    <property type="entry name" value="LRR_8"/>
    <property type="match status" value="3"/>
</dbReference>
<dbReference type="Pfam" id="PF01462">
    <property type="entry name" value="LRRNT"/>
    <property type="match status" value="1"/>
</dbReference>
<dbReference type="PIRSF" id="PIRSF002490">
    <property type="entry name" value="SLRP_I"/>
    <property type="match status" value="1"/>
</dbReference>
<dbReference type="SMART" id="SM00364">
    <property type="entry name" value="LRR_BAC"/>
    <property type="match status" value="3"/>
</dbReference>
<dbReference type="SMART" id="SM00369">
    <property type="entry name" value="LRR_TYP"/>
    <property type="match status" value="8"/>
</dbReference>
<dbReference type="SMART" id="SM00013">
    <property type="entry name" value="LRRNT"/>
    <property type="match status" value="1"/>
</dbReference>
<dbReference type="SUPFAM" id="SSF52058">
    <property type="entry name" value="L domain-like"/>
    <property type="match status" value="1"/>
</dbReference>
<dbReference type="PROSITE" id="PS51450">
    <property type="entry name" value="LRR"/>
    <property type="match status" value="8"/>
</dbReference>
<comment type="function">
    <text evidence="1">May be involved in collagen fiber assembly.</text>
</comment>
<comment type="subunit">
    <text evidence="1">Homodimer. Forms a ternary complex with MFAP2 and ELN (By similarity).</text>
</comment>
<comment type="subcellular location">
    <subcellularLocation>
        <location evidence="1">Secreted</location>
        <location evidence="1">Extracellular space</location>
        <location evidence="1">Extracellular matrix</location>
    </subcellularLocation>
</comment>
<comment type="tissue specificity">
    <text>Found in several connective tissues, especially in articular cartilages.</text>
</comment>
<comment type="PTM">
    <text evidence="1">The two attached glycosaminoglycan chains can be either chondroitin sulfate or dermatan sulfate.</text>
</comment>
<comment type="similarity">
    <text evidence="5">Belongs to the small leucine-rich proteoglycan (SLRP) family. SLRP class I subfamily.</text>
</comment>
<gene>
    <name type="primary">BGN</name>
</gene>
<name>PGS1_SHEEP</name>